<sequence length="330" mass="37303">MATSLRLLDAGPGSLRRWIPTCFAALLLLPPRPNLGYNEDHAEPVCGAPWWSDSLEERHHWPWEVSLQIENEHVCGGALIDQSWVVSAAHCIQGNKEYLVMLGSSTLQPSGSPWALKIPVGDIIMHPKYWGQNFIRSDIALLCLETPVTFNKYIQPICLPEHNFNLKVGMKCWVTGWGQAKQHPSAKLTRSLELWEAEVSIVDNKNCDRVFHKKTFYPQVIPLIRKNMICTTNHRENPCYGDPGGPLACEVHGRWILAGIFSWEKACTKAPNLSVYTRIDKYTGWIKEQVSRGARSGRCRTSCLLFLPWLLQLPVSPGPPHPFLFLLCLC</sequence>
<feature type="signal peptide" evidence="1">
    <location>
        <begin position="1"/>
        <end position="35"/>
    </location>
</feature>
<feature type="chain" id="PRO_5000095982" description="Inactive serine protease 45">
    <location>
        <begin position="36"/>
        <end position="330"/>
    </location>
</feature>
<feature type="domain" description="Peptidase S1" evidence="2">
    <location>
        <begin position="45"/>
        <end position="291"/>
    </location>
</feature>
<feature type="glycosylation site" description="N-linked (GlcNAc...) asparagine" evidence="1">
    <location>
        <position position="272"/>
    </location>
</feature>
<feature type="disulfide bond" evidence="2">
    <location>
        <begin position="75"/>
        <end position="91"/>
    </location>
</feature>
<feature type="disulfide bond" evidence="2">
    <location>
        <begin position="172"/>
        <end position="249"/>
    </location>
</feature>
<feature type="disulfide bond" evidence="2">
    <location>
        <begin position="207"/>
        <end position="230"/>
    </location>
</feature>
<feature type="disulfide bond" evidence="2">
    <location>
        <begin position="239"/>
        <end position="267"/>
    </location>
</feature>
<name>PRS45_RAT</name>
<organism>
    <name type="scientific">Rattus norvegicus</name>
    <name type="common">Rat</name>
    <dbReference type="NCBI Taxonomy" id="10116"/>
    <lineage>
        <taxon>Eukaryota</taxon>
        <taxon>Metazoa</taxon>
        <taxon>Chordata</taxon>
        <taxon>Craniata</taxon>
        <taxon>Vertebrata</taxon>
        <taxon>Euteleostomi</taxon>
        <taxon>Mammalia</taxon>
        <taxon>Eutheria</taxon>
        <taxon>Euarchontoglires</taxon>
        <taxon>Glires</taxon>
        <taxon>Rodentia</taxon>
        <taxon>Myomorpha</taxon>
        <taxon>Muroidea</taxon>
        <taxon>Muridae</taxon>
        <taxon>Murinae</taxon>
        <taxon>Rattus</taxon>
    </lineage>
</organism>
<keyword id="KW-1015">Disulfide bond</keyword>
<keyword id="KW-0325">Glycoprotein</keyword>
<keyword id="KW-1185">Reference proteome</keyword>
<keyword id="KW-0964">Secreted</keyword>
<keyword id="KW-0732">Signal</keyword>
<comment type="subcellular location">
    <subcellularLocation>
        <location evidence="3">Secreted</location>
    </subcellularLocation>
</comment>
<comment type="similarity">
    <text evidence="2">Belongs to the peptidase S1 family.</text>
</comment>
<comment type="caution">
    <text evidence="3">In contrast to other members of the family, lacks the conserved Ser at position 243 which is replaced by a Pro residue, suggesting it is inactive.</text>
</comment>
<protein>
    <recommendedName>
        <fullName>Inactive serine protease 45</fullName>
    </recommendedName>
    <alternativeName>
        <fullName>Inactive testis serine protease 5</fullName>
    </alternativeName>
</protein>
<accession>Q6IE62</accession>
<proteinExistence type="evidence at transcript level"/>
<evidence type="ECO:0000255" key="1"/>
<evidence type="ECO:0000255" key="2">
    <source>
        <dbReference type="PROSITE-ProRule" id="PRU00274"/>
    </source>
</evidence>
<evidence type="ECO:0000305" key="3"/>
<gene>
    <name type="primary">Prss45</name>
    <name type="synonym">Tessp5</name>
</gene>
<reference key="1">
    <citation type="journal article" date="2004" name="Nature">
        <title>Genome sequence of the Brown Norway rat yields insights into mammalian evolution.</title>
        <authorList>
            <person name="Gibbs R.A."/>
            <person name="Weinstock G.M."/>
            <person name="Metzker M.L."/>
            <person name="Muzny D.M."/>
            <person name="Sodergren E.J."/>
            <person name="Scherer S."/>
            <person name="Scott G."/>
            <person name="Steffen D."/>
            <person name="Worley K.C."/>
            <person name="Burch P.E."/>
            <person name="Okwuonu G."/>
            <person name="Hines S."/>
            <person name="Lewis L."/>
            <person name="Deramo C."/>
            <person name="Delgado O."/>
            <person name="Dugan-Rocha S."/>
            <person name="Miner G."/>
            <person name="Morgan M."/>
            <person name="Hawes A."/>
            <person name="Gill R."/>
            <person name="Holt R.A."/>
            <person name="Adams M.D."/>
            <person name="Amanatides P.G."/>
            <person name="Baden-Tillson H."/>
            <person name="Barnstead M."/>
            <person name="Chin S."/>
            <person name="Evans C.A."/>
            <person name="Ferriera S."/>
            <person name="Fosler C."/>
            <person name="Glodek A."/>
            <person name="Gu Z."/>
            <person name="Jennings D."/>
            <person name="Kraft C.L."/>
            <person name="Nguyen T."/>
            <person name="Pfannkoch C.M."/>
            <person name="Sitter C."/>
            <person name="Sutton G.G."/>
            <person name="Venter J.C."/>
            <person name="Woodage T."/>
            <person name="Smith D."/>
            <person name="Lee H.-M."/>
            <person name="Gustafson E."/>
            <person name="Cahill P."/>
            <person name="Kana A."/>
            <person name="Doucette-Stamm L."/>
            <person name="Weinstock K."/>
            <person name="Fechtel K."/>
            <person name="Weiss R.B."/>
            <person name="Dunn D.M."/>
            <person name="Green E.D."/>
            <person name="Blakesley R.W."/>
            <person name="Bouffard G.G."/>
            <person name="De Jong P.J."/>
            <person name="Osoegawa K."/>
            <person name="Zhu B."/>
            <person name="Marra M."/>
            <person name="Schein J."/>
            <person name="Bosdet I."/>
            <person name="Fjell C."/>
            <person name="Jones S."/>
            <person name="Krzywinski M."/>
            <person name="Mathewson C."/>
            <person name="Siddiqui A."/>
            <person name="Wye N."/>
            <person name="McPherson J."/>
            <person name="Zhao S."/>
            <person name="Fraser C.M."/>
            <person name="Shetty J."/>
            <person name="Shatsman S."/>
            <person name="Geer K."/>
            <person name="Chen Y."/>
            <person name="Abramzon S."/>
            <person name="Nierman W.C."/>
            <person name="Havlak P.H."/>
            <person name="Chen R."/>
            <person name="Durbin K.J."/>
            <person name="Egan A."/>
            <person name="Ren Y."/>
            <person name="Song X.-Z."/>
            <person name="Li B."/>
            <person name="Liu Y."/>
            <person name="Qin X."/>
            <person name="Cawley S."/>
            <person name="Cooney A.J."/>
            <person name="D'Souza L.M."/>
            <person name="Martin K."/>
            <person name="Wu J.Q."/>
            <person name="Gonzalez-Garay M.L."/>
            <person name="Jackson A.R."/>
            <person name="Kalafus K.J."/>
            <person name="McLeod M.P."/>
            <person name="Milosavljevic A."/>
            <person name="Virk D."/>
            <person name="Volkov A."/>
            <person name="Wheeler D.A."/>
            <person name="Zhang Z."/>
            <person name="Bailey J.A."/>
            <person name="Eichler E.E."/>
            <person name="Tuzun E."/>
            <person name="Birney E."/>
            <person name="Mongin E."/>
            <person name="Ureta-Vidal A."/>
            <person name="Woodwark C."/>
            <person name="Zdobnov E."/>
            <person name="Bork P."/>
            <person name="Suyama M."/>
            <person name="Torrents D."/>
            <person name="Alexandersson M."/>
            <person name="Trask B.J."/>
            <person name="Young J.M."/>
            <person name="Huang H."/>
            <person name="Wang H."/>
            <person name="Xing H."/>
            <person name="Daniels S."/>
            <person name="Gietzen D."/>
            <person name="Schmidt J."/>
            <person name="Stevens K."/>
            <person name="Vitt U."/>
            <person name="Wingrove J."/>
            <person name="Camara F."/>
            <person name="Mar Alba M."/>
            <person name="Abril J.F."/>
            <person name="Guigo R."/>
            <person name="Smit A."/>
            <person name="Dubchak I."/>
            <person name="Rubin E.M."/>
            <person name="Couronne O."/>
            <person name="Poliakov A."/>
            <person name="Huebner N."/>
            <person name="Ganten D."/>
            <person name="Goesele C."/>
            <person name="Hummel O."/>
            <person name="Kreitler T."/>
            <person name="Lee Y.-A."/>
            <person name="Monti J."/>
            <person name="Schulz H."/>
            <person name="Zimdahl H."/>
            <person name="Himmelbauer H."/>
            <person name="Lehrach H."/>
            <person name="Jacob H.J."/>
            <person name="Bromberg S."/>
            <person name="Gullings-Handley J."/>
            <person name="Jensen-Seaman M.I."/>
            <person name="Kwitek A.E."/>
            <person name="Lazar J."/>
            <person name="Pasko D."/>
            <person name="Tonellato P.J."/>
            <person name="Twigger S."/>
            <person name="Ponting C.P."/>
            <person name="Duarte J.M."/>
            <person name="Rice S."/>
            <person name="Goodstadt L."/>
            <person name="Beatson S.A."/>
            <person name="Emes R.D."/>
            <person name="Winter E.E."/>
            <person name="Webber C."/>
            <person name="Brandt P."/>
            <person name="Nyakatura G."/>
            <person name="Adetobi M."/>
            <person name="Chiaromonte F."/>
            <person name="Elnitski L."/>
            <person name="Eswara P."/>
            <person name="Hardison R.C."/>
            <person name="Hou M."/>
            <person name="Kolbe D."/>
            <person name="Makova K."/>
            <person name="Miller W."/>
            <person name="Nekrutenko A."/>
            <person name="Riemer C."/>
            <person name="Schwartz S."/>
            <person name="Taylor J."/>
            <person name="Yang S."/>
            <person name="Zhang Y."/>
            <person name="Lindpaintner K."/>
            <person name="Andrews T.D."/>
            <person name="Caccamo M."/>
            <person name="Clamp M."/>
            <person name="Clarke L."/>
            <person name="Curwen V."/>
            <person name="Durbin R.M."/>
            <person name="Eyras E."/>
            <person name="Searle S.M."/>
            <person name="Cooper G.M."/>
            <person name="Batzoglou S."/>
            <person name="Brudno M."/>
            <person name="Sidow A."/>
            <person name="Stone E.A."/>
            <person name="Payseur B.A."/>
            <person name="Bourque G."/>
            <person name="Lopez-Otin C."/>
            <person name="Puente X.S."/>
            <person name="Chakrabarti K."/>
            <person name="Chatterji S."/>
            <person name="Dewey C."/>
            <person name="Pachter L."/>
            <person name="Bray N."/>
            <person name="Yap V.B."/>
            <person name="Caspi A."/>
            <person name="Tesler G."/>
            <person name="Pevzner P.A."/>
            <person name="Haussler D."/>
            <person name="Roskin K.M."/>
            <person name="Baertsch R."/>
            <person name="Clawson H."/>
            <person name="Furey T.S."/>
            <person name="Hinrichs A.S."/>
            <person name="Karolchik D."/>
            <person name="Kent W.J."/>
            <person name="Rosenbloom K.R."/>
            <person name="Trumbower H."/>
            <person name="Weirauch M."/>
            <person name="Cooper D.N."/>
            <person name="Stenson P.D."/>
            <person name="Ma B."/>
            <person name="Brent M."/>
            <person name="Arumugam M."/>
            <person name="Shteynberg D."/>
            <person name="Copley R.R."/>
            <person name="Taylor M.S."/>
            <person name="Riethman H."/>
            <person name="Mudunuri U."/>
            <person name="Peterson J."/>
            <person name="Guyer M."/>
            <person name="Felsenfeld A."/>
            <person name="Old S."/>
            <person name="Mockrin S."/>
            <person name="Collins F.S."/>
        </authorList>
    </citation>
    <scope>NUCLEOTIDE SEQUENCE [LARGE SCALE GENOMIC DNA]</scope>
    <source>
        <strain>Brown Norway</strain>
    </source>
</reference>
<reference key="2">
    <citation type="journal article" date="2004" name="Genome Res.">
        <title>A genomic analysis of rat proteases and protease inhibitors.</title>
        <authorList>
            <person name="Puente X.S."/>
            <person name="Lopez-Otin C."/>
        </authorList>
    </citation>
    <scope>IDENTIFICATION</scope>
    <source>
        <strain>Sprague-Dawley</strain>
    </source>
</reference>
<dbReference type="EMBL" id="AABR03062292">
    <property type="status" value="NOT_ANNOTATED_CDS"/>
    <property type="molecule type" value="Genomic_DNA"/>
</dbReference>
<dbReference type="EMBL" id="BN000331">
    <property type="protein sequence ID" value="CAE48386.1"/>
    <property type="molecule type" value="mRNA"/>
</dbReference>
<dbReference type="RefSeq" id="NP_001008864.1">
    <property type="nucleotide sequence ID" value="NM_001008864.2"/>
</dbReference>
<dbReference type="SMR" id="Q6IE62"/>
<dbReference type="FunCoup" id="Q6IE62">
    <property type="interactions" value="12"/>
</dbReference>
<dbReference type="STRING" id="10116.ENSRNOP00000040152"/>
<dbReference type="MEROPS" id="S01.968"/>
<dbReference type="GlyCosmos" id="Q6IE62">
    <property type="glycosylation" value="1 site, No reported glycans"/>
</dbReference>
<dbReference type="GlyGen" id="Q6IE62">
    <property type="glycosylation" value="1 site"/>
</dbReference>
<dbReference type="PaxDb" id="10116-ENSRNOP00000040152"/>
<dbReference type="Ensembl" id="ENSRNOT00000043249.3">
    <property type="protein sequence ID" value="ENSRNOP00000040152.1"/>
    <property type="gene ID" value="ENSRNOG00000029649.3"/>
</dbReference>
<dbReference type="GeneID" id="408244"/>
<dbReference type="KEGG" id="rno:408244"/>
<dbReference type="UCSC" id="RGD:1303021">
    <property type="organism name" value="rat"/>
</dbReference>
<dbReference type="AGR" id="RGD:1303021"/>
<dbReference type="CTD" id="260408"/>
<dbReference type="RGD" id="1303021">
    <property type="gene designation" value="Prss45"/>
</dbReference>
<dbReference type="eggNOG" id="KOG3627">
    <property type="taxonomic scope" value="Eukaryota"/>
</dbReference>
<dbReference type="GeneTree" id="ENSGT00940000161932"/>
<dbReference type="HOGENOM" id="CLU_006842_0_4_1"/>
<dbReference type="InParanoid" id="Q6IE62"/>
<dbReference type="OMA" id="GNMICAT"/>
<dbReference type="OrthoDB" id="9633857at2759"/>
<dbReference type="PhylomeDB" id="Q6IE62"/>
<dbReference type="TreeFam" id="TF351676"/>
<dbReference type="PRO" id="PR:Q6IE62"/>
<dbReference type="Proteomes" id="UP000002494">
    <property type="component" value="Chromosome 8"/>
</dbReference>
<dbReference type="Bgee" id="ENSRNOG00000029649">
    <property type="expression patterns" value="Expressed in testis"/>
</dbReference>
<dbReference type="GO" id="GO:0005615">
    <property type="term" value="C:extracellular space"/>
    <property type="evidence" value="ECO:0000318"/>
    <property type="project" value="GO_Central"/>
</dbReference>
<dbReference type="GO" id="GO:0004252">
    <property type="term" value="F:serine-type endopeptidase activity"/>
    <property type="evidence" value="ECO:0000318"/>
    <property type="project" value="GO_Central"/>
</dbReference>
<dbReference type="GO" id="GO:0006508">
    <property type="term" value="P:proteolysis"/>
    <property type="evidence" value="ECO:0000318"/>
    <property type="project" value="GO_Central"/>
</dbReference>
<dbReference type="CDD" id="cd00190">
    <property type="entry name" value="Tryp_SPc"/>
    <property type="match status" value="1"/>
</dbReference>
<dbReference type="FunFam" id="2.40.10.10:FF:000105">
    <property type="entry name" value="Inactive serine protease 45"/>
    <property type="match status" value="1"/>
</dbReference>
<dbReference type="FunFam" id="2.40.10.10:FF:000004">
    <property type="entry name" value="Tryptase gamma 1"/>
    <property type="match status" value="1"/>
</dbReference>
<dbReference type="Gene3D" id="2.40.10.10">
    <property type="entry name" value="Trypsin-like serine proteases"/>
    <property type="match status" value="2"/>
</dbReference>
<dbReference type="InterPro" id="IPR009003">
    <property type="entry name" value="Peptidase_S1_PA"/>
</dbReference>
<dbReference type="InterPro" id="IPR043504">
    <property type="entry name" value="Peptidase_S1_PA_chymotrypsin"/>
</dbReference>
<dbReference type="InterPro" id="IPR001314">
    <property type="entry name" value="Peptidase_S1A"/>
</dbReference>
<dbReference type="InterPro" id="IPR051487">
    <property type="entry name" value="Ser/Thr_Proteases_Immune/Dev"/>
</dbReference>
<dbReference type="InterPro" id="IPR001254">
    <property type="entry name" value="Trypsin_dom"/>
</dbReference>
<dbReference type="InterPro" id="IPR018114">
    <property type="entry name" value="TRYPSIN_HIS"/>
</dbReference>
<dbReference type="PANTHER" id="PTHR24256">
    <property type="entry name" value="TRYPTASE-RELATED"/>
    <property type="match status" value="1"/>
</dbReference>
<dbReference type="Pfam" id="PF00089">
    <property type="entry name" value="Trypsin"/>
    <property type="match status" value="1"/>
</dbReference>
<dbReference type="PRINTS" id="PR00722">
    <property type="entry name" value="CHYMOTRYPSIN"/>
</dbReference>
<dbReference type="SMART" id="SM00020">
    <property type="entry name" value="Tryp_SPc"/>
    <property type="match status" value="1"/>
</dbReference>
<dbReference type="SUPFAM" id="SSF50494">
    <property type="entry name" value="Trypsin-like serine proteases"/>
    <property type="match status" value="1"/>
</dbReference>
<dbReference type="PROSITE" id="PS50240">
    <property type="entry name" value="TRYPSIN_DOM"/>
    <property type="match status" value="1"/>
</dbReference>
<dbReference type="PROSITE" id="PS00134">
    <property type="entry name" value="TRYPSIN_HIS"/>
    <property type="match status" value="1"/>
</dbReference>